<feature type="chain" id="PRO_1000091558" description="Serine hydroxymethyltransferase">
    <location>
        <begin position="1"/>
        <end position="434"/>
    </location>
</feature>
<feature type="binding site" evidence="1">
    <location>
        <position position="133"/>
    </location>
    <ligand>
        <name>(6S)-5,6,7,8-tetrahydrofolate</name>
        <dbReference type="ChEBI" id="CHEBI:57453"/>
    </ligand>
</feature>
<feature type="binding site" evidence="1">
    <location>
        <begin position="137"/>
        <end position="139"/>
    </location>
    <ligand>
        <name>(6S)-5,6,7,8-tetrahydrofolate</name>
        <dbReference type="ChEBI" id="CHEBI:57453"/>
    </ligand>
</feature>
<feature type="site" description="Plays an important role in substrate specificity" evidence="1">
    <location>
        <position position="241"/>
    </location>
</feature>
<feature type="modified residue" description="N6-(pyridoxal phosphate)lysine" evidence="1">
    <location>
        <position position="242"/>
    </location>
</feature>
<protein>
    <recommendedName>
        <fullName evidence="1">Serine hydroxymethyltransferase</fullName>
        <shortName evidence="1">SHMT</shortName>
        <shortName evidence="1">Serine methylase</shortName>
        <ecNumber evidence="1">2.1.2.1</ecNumber>
    </recommendedName>
</protein>
<accession>B1ZJN1</accession>
<sequence>MSAGTASDTTALNTFFSAQLAETDPEIAKAISQELGRQQHEIELIASENIVSRAVLEAQGSVLTNKYAEGYPGRRYYGGCQFVDIAEELAIDRAKRLFGCGFANVQPNSGSQANQGVFMALMQPGDTFLGLDLAAGGHLTHGAPPNVSGKWFKPVSYTVRREDQRIDMEQVERLAQEHKPKVIIAGGSGYPRHWDFAKFREIADSVGAYFFVDMAHFAGLVAAGLHPSPFPHAHVATTTTHKTLRGPRGGMILTNDEALAKKFNSAIFPGLQGGPLMHVIAAKAVAFGEALKPEFKIYAKQVIDNAKALADTIISGGYDITSGGTDNHLMLVDLQKKGLTGKAAEAALSRADITCNKNGVPFDPQKPTITSGIRLGTPASTTRGFGVAEFKQVGSLIVQVLDGLADKGESGDSTVEAAVKEKVHALTDRFPIYS</sequence>
<organism>
    <name type="scientific">Methylorubrum populi (strain ATCC BAA-705 / NCIMB 13946 / BJ001)</name>
    <name type="common">Methylobacterium populi</name>
    <dbReference type="NCBI Taxonomy" id="441620"/>
    <lineage>
        <taxon>Bacteria</taxon>
        <taxon>Pseudomonadati</taxon>
        <taxon>Pseudomonadota</taxon>
        <taxon>Alphaproteobacteria</taxon>
        <taxon>Hyphomicrobiales</taxon>
        <taxon>Methylobacteriaceae</taxon>
        <taxon>Methylorubrum</taxon>
    </lineage>
</organism>
<comment type="function">
    <text evidence="1">Catalyzes the reversible interconversion of serine and glycine with tetrahydrofolate (THF) serving as the one-carbon carrier. This reaction serves as the major source of one-carbon groups required for the biosynthesis of purines, thymidylate, methionine, and other important biomolecules. Also exhibits THF-independent aldolase activity toward beta-hydroxyamino acids, producing glycine and aldehydes, via a retro-aldol mechanism.</text>
</comment>
<comment type="catalytic activity">
    <reaction evidence="1">
        <text>(6R)-5,10-methylene-5,6,7,8-tetrahydrofolate + glycine + H2O = (6S)-5,6,7,8-tetrahydrofolate + L-serine</text>
        <dbReference type="Rhea" id="RHEA:15481"/>
        <dbReference type="ChEBI" id="CHEBI:15377"/>
        <dbReference type="ChEBI" id="CHEBI:15636"/>
        <dbReference type="ChEBI" id="CHEBI:33384"/>
        <dbReference type="ChEBI" id="CHEBI:57305"/>
        <dbReference type="ChEBI" id="CHEBI:57453"/>
        <dbReference type="EC" id="2.1.2.1"/>
    </reaction>
</comment>
<comment type="cofactor">
    <cofactor evidence="1">
        <name>pyridoxal 5'-phosphate</name>
        <dbReference type="ChEBI" id="CHEBI:597326"/>
    </cofactor>
</comment>
<comment type="pathway">
    <text evidence="1">One-carbon metabolism; tetrahydrofolate interconversion.</text>
</comment>
<comment type="pathway">
    <text evidence="1">Amino-acid biosynthesis; glycine biosynthesis; glycine from L-serine: step 1/1.</text>
</comment>
<comment type="subunit">
    <text evidence="1">Homodimer.</text>
</comment>
<comment type="subcellular location">
    <subcellularLocation>
        <location evidence="1">Cytoplasm</location>
    </subcellularLocation>
</comment>
<comment type="similarity">
    <text evidence="1">Belongs to the SHMT family.</text>
</comment>
<proteinExistence type="inferred from homology"/>
<name>GLYA_METPB</name>
<reference key="1">
    <citation type="submission" date="2008-04" db="EMBL/GenBank/DDBJ databases">
        <title>Complete sequence of chromosome of Methylobacterium populi BJ001.</title>
        <authorList>
            <consortium name="US DOE Joint Genome Institute"/>
            <person name="Copeland A."/>
            <person name="Lucas S."/>
            <person name="Lapidus A."/>
            <person name="Glavina del Rio T."/>
            <person name="Dalin E."/>
            <person name="Tice H."/>
            <person name="Bruce D."/>
            <person name="Goodwin L."/>
            <person name="Pitluck S."/>
            <person name="Chertkov O."/>
            <person name="Brettin T."/>
            <person name="Detter J.C."/>
            <person name="Han C."/>
            <person name="Kuske C.R."/>
            <person name="Schmutz J."/>
            <person name="Larimer F."/>
            <person name="Land M."/>
            <person name="Hauser L."/>
            <person name="Kyrpides N."/>
            <person name="Mikhailova N."/>
            <person name="Marx C."/>
            <person name="Richardson P."/>
        </authorList>
    </citation>
    <scope>NUCLEOTIDE SEQUENCE [LARGE SCALE GENOMIC DNA]</scope>
    <source>
        <strain>ATCC BAA-705 / NCIMB 13946 / BJ001</strain>
    </source>
</reference>
<dbReference type="EC" id="2.1.2.1" evidence="1"/>
<dbReference type="EMBL" id="CP001029">
    <property type="protein sequence ID" value="ACB81517.1"/>
    <property type="molecule type" value="Genomic_DNA"/>
</dbReference>
<dbReference type="RefSeq" id="WP_012455234.1">
    <property type="nucleotide sequence ID" value="NC_010725.1"/>
</dbReference>
<dbReference type="SMR" id="B1ZJN1"/>
<dbReference type="STRING" id="441620.Mpop_3366"/>
<dbReference type="KEGG" id="mpo:Mpop_3366"/>
<dbReference type="eggNOG" id="COG0112">
    <property type="taxonomic scope" value="Bacteria"/>
</dbReference>
<dbReference type="HOGENOM" id="CLU_022477_2_1_5"/>
<dbReference type="OrthoDB" id="9803846at2"/>
<dbReference type="UniPathway" id="UPA00193"/>
<dbReference type="UniPathway" id="UPA00288">
    <property type="reaction ID" value="UER01023"/>
</dbReference>
<dbReference type="Proteomes" id="UP000007136">
    <property type="component" value="Chromosome"/>
</dbReference>
<dbReference type="GO" id="GO:0005829">
    <property type="term" value="C:cytosol"/>
    <property type="evidence" value="ECO:0007669"/>
    <property type="project" value="TreeGrafter"/>
</dbReference>
<dbReference type="GO" id="GO:0004372">
    <property type="term" value="F:glycine hydroxymethyltransferase activity"/>
    <property type="evidence" value="ECO:0007669"/>
    <property type="project" value="UniProtKB-UniRule"/>
</dbReference>
<dbReference type="GO" id="GO:0030170">
    <property type="term" value="F:pyridoxal phosphate binding"/>
    <property type="evidence" value="ECO:0007669"/>
    <property type="project" value="UniProtKB-UniRule"/>
</dbReference>
<dbReference type="GO" id="GO:0019264">
    <property type="term" value="P:glycine biosynthetic process from serine"/>
    <property type="evidence" value="ECO:0007669"/>
    <property type="project" value="UniProtKB-UniRule"/>
</dbReference>
<dbReference type="GO" id="GO:0035999">
    <property type="term" value="P:tetrahydrofolate interconversion"/>
    <property type="evidence" value="ECO:0007669"/>
    <property type="project" value="UniProtKB-UniRule"/>
</dbReference>
<dbReference type="CDD" id="cd00378">
    <property type="entry name" value="SHMT"/>
    <property type="match status" value="1"/>
</dbReference>
<dbReference type="FunFam" id="3.40.640.10:FF:000001">
    <property type="entry name" value="Serine hydroxymethyltransferase"/>
    <property type="match status" value="1"/>
</dbReference>
<dbReference type="FunFam" id="3.90.1150.10:FF:000003">
    <property type="entry name" value="Serine hydroxymethyltransferase"/>
    <property type="match status" value="1"/>
</dbReference>
<dbReference type="Gene3D" id="3.90.1150.10">
    <property type="entry name" value="Aspartate Aminotransferase, domain 1"/>
    <property type="match status" value="1"/>
</dbReference>
<dbReference type="Gene3D" id="3.40.640.10">
    <property type="entry name" value="Type I PLP-dependent aspartate aminotransferase-like (Major domain)"/>
    <property type="match status" value="1"/>
</dbReference>
<dbReference type="HAMAP" id="MF_00051">
    <property type="entry name" value="SHMT"/>
    <property type="match status" value="1"/>
</dbReference>
<dbReference type="InterPro" id="IPR015424">
    <property type="entry name" value="PyrdxlP-dep_Trfase"/>
</dbReference>
<dbReference type="InterPro" id="IPR015421">
    <property type="entry name" value="PyrdxlP-dep_Trfase_major"/>
</dbReference>
<dbReference type="InterPro" id="IPR015422">
    <property type="entry name" value="PyrdxlP-dep_Trfase_small"/>
</dbReference>
<dbReference type="InterPro" id="IPR001085">
    <property type="entry name" value="Ser_HO-MeTrfase"/>
</dbReference>
<dbReference type="InterPro" id="IPR049943">
    <property type="entry name" value="Ser_HO-MeTrfase-like"/>
</dbReference>
<dbReference type="InterPro" id="IPR019798">
    <property type="entry name" value="Ser_HO-MeTrfase_PLP_BS"/>
</dbReference>
<dbReference type="InterPro" id="IPR039429">
    <property type="entry name" value="SHMT-like_dom"/>
</dbReference>
<dbReference type="NCBIfam" id="NF000586">
    <property type="entry name" value="PRK00011.1"/>
    <property type="match status" value="1"/>
</dbReference>
<dbReference type="PANTHER" id="PTHR11680">
    <property type="entry name" value="SERINE HYDROXYMETHYLTRANSFERASE"/>
    <property type="match status" value="1"/>
</dbReference>
<dbReference type="PANTHER" id="PTHR11680:SF35">
    <property type="entry name" value="SERINE HYDROXYMETHYLTRANSFERASE 1"/>
    <property type="match status" value="1"/>
</dbReference>
<dbReference type="Pfam" id="PF00464">
    <property type="entry name" value="SHMT"/>
    <property type="match status" value="1"/>
</dbReference>
<dbReference type="PIRSF" id="PIRSF000412">
    <property type="entry name" value="SHMT"/>
    <property type="match status" value="1"/>
</dbReference>
<dbReference type="SUPFAM" id="SSF53383">
    <property type="entry name" value="PLP-dependent transferases"/>
    <property type="match status" value="1"/>
</dbReference>
<dbReference type="PROSITE" id="PS00096">
    <property type="entry name" value="SHMT"/>
    <property type="match status" value="1"/>
</dbReference>
<keyword id="KW-0028">Amino-acid biosynthesis</keyword>
<keyword id="KW-0963">Cytoplasm</keyword>
<keyword id="KW-0554">One-carbon metabolism</keyword>
<keyword id="KW-0663">Pyridoxal phosphate</keyword>
<keyword id="KW-0808">Transferase</keyword>
<evidence type="ECO:0000255" key="1">
    <source>
        <dbReference type="HAMAP-Rule" id="MF_00051"/>
    </source>
</evidence>
<gene>
    <name evidence="1" type="primary">glyA</name>
    <name type="ordered locus">Mpop_3366</name>
</gene>